<name>DING_STAA8</name>
<keyword id="KW-0067">ATP-binding</keyword>
<keyword id="KW-0269">Exonuclease</keyword>
<keyword id="KW-0378">Hydrolase</keyword>
<keyword id="KW-0540">Nuclease</keyword>
<keyword id="KW-0547">Nucleotide-binding</keyword>
<keyword id="KW-1185">Reference proteome</keyword>
<dbReference type="EC" id="3.1.-.-" evidence="1"/>
<dbReference type="EMBL" id="CP000253">
    <property type="protein sequence ID" value="ABD30557.1"/>
    <property type="molecule type" value="Genomic_DNA"/>
</dbReference>
<dbReference type="RefSeq" id="WP_000525078.1">
    <property type="nucleotide sequence ID" value="NZ_LS483365.1"/>
</dbReference>
<dbReference type="RefSeq" id="YP_499990.1">
    <property type="nucleotide sequence ID" value="NC_007795.1"/>
</dbReference>
<dbReference type="SMR" id="Q2FYH5"/>
<dbReference type="STRING" id="93061.SAOUHSC_01472"/>
<dbReference type="PaxDb" id="1280-SAXN108_1478"/>
<dbReference type="DNASU" id="3919914"/>
<dbReference type="GeneID" id="3919914"/>
<dbReference type="KEGG" id="sao:SAOUHSC_01472"/>
<dbReference type="PATRIC" id="fig|93061.5.peg.1341"/>
<dbReference type="eggNOG" id="COG0847">
    <property type="taxonomic scope" value="Bacteria"/>
</dbReference>
<dbReference type="eggNOG" id="COG1199">
    <property type="taxonomic scope" value="Bacteria"/>
</dbReference>
<dbReference type="HOGENOM" id="CLU_012117_1_1_9"/>
<dbReference type="OrthoDB" id="9803913at2"/>
<dbReference type="PRO" id="PR:Q2FYH5"/>
<dbReference type="Proteomes" id="UP000008816">
    <property type="component" value="Chromosome"/>
</dbReference>
<dbReference type="GO" id="GO:0005829">
    <property type="term" value="C:cytosol"/>
    <property type="evidence" value="ECO:0000318"/>
    <property type="project" value="GO_Central"/>
</dbReference>
<dbReference type="GO" id="GO:0008408">
    <property type="term" value="F:3'-5' exonuclease activity"/>
    <property type="evidence" value="ECO:0000318"/>
    <property type="project" value="GO_Central"/>
</dbReference>
<dbReference type="GO" id="GO:0005524">
    <property type="term" value="F:ATP binding"/>
    <property type="evidence" value="ECO:0007669"/>
    <property type="project" value="UniProtKB-UniRule"/>
</dbReference>
<dbReference type="GO" id="GO:0003677">
    <property type="term" value="F:DNA binding"/>
    <property type="evidence" value="ECO:0007669"/>
    <property type="project" value="InterPro"/>
</dbReference>
<dbReference type="GO" id="GO:0003887">
    <property type="term" value="F:DNA-directed DNA polymerase activity"/>
    <property type="evidence" value="ECO:0007669"/>
    <property type="project" value="InterPro"/>
</dbReference>
<dbReference type="GO" id="GO:0004386">
    <property type="term" value="F:helicase activity"/>
    <property type="evidence" value="ECO:0007669"/>
    <property type="project" value="InterPro"/>
</dbReference>
<dbReference type="GO" id="GO:0016818">
    <property type="term" value="F:hydrolase activity, acting on acid anhydrides, in phosphorus-containing anhydrides"/>
    <property type="evidence" value="ECO:0007669"/>
    <property type="project" value="InterPro"/>
</dbReference>
<dbReference type="GO" id="GO:0045004">
    <property type="term" value="P:DNA replication proofreading"/>
    <property type="evidence" value="ECO:0000318"/>
    <property type="project" value="GO_Central"/>
</dbReference>
<dbReference type="CDD" id="cd06127">
    <property type="entry name" value="DEDDh"/>
    <property type="match status" value="1"/>
</dbReference>
<dbReference type="FunFam" id="3.30.420.10:FF:000045">
    <property type="entry name" value="3'-5' exonuclease DinG"/>
    <property type="match status" value="1"/>
</dbReference>
<dbReference type="FunFam" id="3.40.50.300:FF:001816">
    <property type="entry name" value="3'-5' exonuclease DinG"/>
    <property type="match status" value="1"/>
</dbReference>
<dbReference type="FunFam" id="3.40.50.300:FF:000437">
    <property type="entry name" value="ATP-dependent DNA helicase DinG"/>
    <property type="match status" value="1"/>
</dbReference>
<dbReference type="Gene3D" id="3.40.50.300">
    <property type="entry name" value="P-loop containing nucleotide triphosphate hydrolases"/>
    <property type="match status" value="2"/>
</dbReference>
<dbReference type="Gene3D" id="3.30.420.10">
    <property type="entry name" value="Ribonuclease H-like superfamily/Ribonuclease H"/>
    <property type="match status" value="1"/>
</dbReference>
<dbReference type="HAMAP" id="MF_02206">
    <property type="entry name" value="DinG_exonucl"/>
    <property type="match status" value="1"/>
</dbReference>
<dbReference type="InterPro" id="IPR006555">
    <property type="entry name" value="ATP-dep_Helicase_C"/>
</dbReference>
<dbReference type="InterPro" id="IPR006310">
    <property type="entry name" value="DinG"/>
</dbReference>
<dbReference type="InterPro" id="IPR006054">
    <property type="entry name" value="DnaQ"/>
</dbReference>
<dbReference type="InterPro" id="IPR013520">
    <property type="entry name" value="Exonuclease_RNaseT/DNA_pol3"/>
</dbReference>
<dbReference type="InterPro" id="IPR014013">
    <property type="entry name" value="Helic_SF1/SF2_ATP-bd_DinG/Rad3"/>
</dbReference>
<dbReference type="InterPro" id="IPR027417">
    <property type="entry name" value="P-loop_NTPase"/>
</dbReference>
<dbReference type="InterPro" id="IPR012337">
    <property type="entry name" value="RNaseH-like_sf"/>
</dbReference>
<dbReference type="InterPro" id="IPR036397">
    <property type="entry name" value="RNaseH_sf"/>
</dbReference>
<dbReference type="NCBIfam" id="TIGR01407">
    <property type="entry name" value="dinG_rel"/>
    <property type="match status" value="1"/>
</dbReference>
<dbReference type="NCBIfam" id="TIGR00573">
    <property type="entry name" value="dnaq"/>
    <property type="match status" value="1"/>
</dbReference>
<dbReference type="PANTHER" id="PTHR30231">
    <property type="entry name" value="DNA POLYMERASE III SUBUNIT EPSILON"/>
    <property type="match status" value="1"/>
</dbReference>
<dbReference type="PANTHER" id="PTHR30231:SF41">
    <property type="entry name" value="DNA POLYMERASE III SUBUNIT EPSILON"/>
    <property type="match status" value="1"/>
</dbReference>
<dbReference type="Pfam" id="PF13307">
    <property type="entry name" value="Helicase_C_2"/>
    <property type="match status" value="1"/>
</dbReference>
<dbReference type="Pfam" id="PF00929">
    <property type="entry name" value="RNase_T"/>
    <property type="match status" value="1"/>
</dbReference>
<dbReference type="SMART" id="SM00479">
    <property type="entry name" value="EXOIII"/>
    <property type="match status" value="1"/>
</dbReference>
<dbReference type="SMART" id="SM00491">
    <property type="entry name" value="HELICc2"/>
    <property type="match status" value="1"/>
</dbReference>
<dbReference type="SUPFAM" id="SSF52540">
    <property type="entry name" value="P-loop containing nucleoside triphosphate hydrolases"/>
    <property type="match status" value="1"/>
</dbReference>
<dbReference type="SUPFAM" id="SSF53098">
    <property type="entry name" value="Ribonuclease H-like"/>
    <property type="match status" value="1"/>
</dbReference>
<dbReference type="PROSITE" id="PS51193">
    <property type="entry name" value="HELICASE_ATP_BIND_2"/>
    <property type="match status" value="1"/>
</dbReference>
<dbReference type="PROSITE" id="PS51194">
    <property type="entry name" value="HELICASE_CTER"/>
    <property type="match status" value="1"/>
</dbReference>
<gene>
    <name evidence="1" type="primary">dinG</name>
    <name type="ordered locus">SAOUHSC_01472</name>
</gene>
<reference key="1">
    <citation type="book" date="2006" name="Gram positive pathogens, 2nd edition">
        <title>The Staphylococcus aureus NCTC 8325 genome.</title>
        <editorList>
            <person name="Fischetti V."/>
            <person name="Novick R."/>
            <person name="Ferretti J."/>
            <person name="Portnoy D."/>
            <person name="Rood J."/>
        </editorList>
        <authorList>
            <person name="Gillaspy A.F."/>
            <person name="Worrell V."/>
            <person name="Orvis J."/>
            <person name="Roe B.A."/>
            <person name="Dyer D.W."/>
            <person name="Iandolo J.J."/>
        </authorList>
    </citation>
    <scope>NUCLEOTIDE SEQUENCE [LARGE SCALE GENOMIC DNA]</scope>
    <source>
        <strain>NCTC 8325 / PS 47</strain>
    </source>
</reference>
<reference key="2">
    <citation type="journal article" date="2001" name="J. Bacteriol.">
        <title>Transcription profiling-based identification of Staphylococcus aureus genes regulated by the agr and/or sarA loci.</title>
        <authorList>
            <person name="Dunman P.M."/>
            <person name="Murphy E."/>
            <person name="Haney S."/>
            <person name="Palacios D."/>
            <person name="Tucker-Kellogg G."/>
            <person name="Wu S."/>
            <person name="Brown E.L."/>
            <person name="Zagursky R.J."/>
            <person name="Shlaes D."/>
            <person name="Projan S.J."/>
        </authorList>
    </citation>
    <scope>INDUCTION</scope>
</reference>
<accession>Q2FYH5</accession>
<evidence type="ECO:0000255" key="1">
    <source>
        <dbReference type="HAMAP-Rule" id="MF_02206"/>
    </source>
</evidence>
<evidence type="ECO:0000269" key="2">
    <source>
    </source>
</evidence>
<protein>
    <recommendedName>
        <fullName evidence="1">3'-5' exonuclease DinG</fullName>
        <ecNumber evidence="1">3.1.-.-</ecNumber>
    </recommendedName>
</protein>
<sequence>MGMATYAVVDLETTGNQLDFDDIIQIGITFVRNNQIIDTYHSMIRTNLEIPPFIQALTSIEENMLQQAPYFNQVAQEIYDKIKDCIFVAHNVDFDLNFIKKAFKDCNIQYRPKKVIDTLEIFKIAFPTDKSYQLSELAEAHGITLANAHRADEDAATTAKLMILAFEKFEKLPLDTLKQLYYLSKQLKYDLYDIFFEMVRQYDAKPLDKSYEKFEQIIYRKQVDFKKPTTNYNGSLKSLYSKAVDQLGLTYRPQQLYLAETILDQLMHSEKAMIEASLGSGKSLAYLLAALMYNIETGKHVMISTNTKLLQSQLLEKDIPAMNEALNFKINALLIKSKSDYISLGLISQILKDDTSNYEVNILKMQLLIWITETPSGDIQELNLKGGQKMYFDQKIETYVPARHDVHYYNFIKRNAQNIQIGITNHAHLIHSDVENSIYQLFDDCIVDEAHRLPDYALNQVTNELSYADIKYQLGLIGKNENEKLLKAIDQLEKQRILEKLDIAPIDIFGLKASMNEIHELNEQLFSTIFTIINDSDVYDDDIHRFHNVFTFETKDILKDLHAIIDKLNKTLEIFNGISHKTVKSLRKQLLYLKDKFKNIEQSLKAGHTSFISIKNLSQKSTIRLYVKDYAVKDVLTKQVLEKFKSLIFISGTLKFNHSFEAFKQLFNKDVHFNTFEVNTSLQSAKNTSVFIPSDVASYQYKNIDEYVASIVSYIIEYTTITSSKCLVLFTSYKMMHMVQDMLNELPEFEDYVVLTQQQNQNYKIVQQFNNFDKAILLGTSTFFEGFDFQANGIKCVMIAKLPFMNKHNAKYWLMDSEFTSTFKEYVLPDAVTRFRQGLGRLIRNENDRGIIVSFDDRLINSNYKNFFEQTLENYRQKKGDIQQFGKLLRQIQKKKK</sequence>
<proteinExistence type="evidence at transcript level"/>
<comment type="function">
    <text evidence="1">3'-5' exonuclease.</text>
</comment>
<comment type="induction">
    <text evidence="2">Down-regulated by agr.</text>
</comment>
<comment type="similarity">
    <text evidence="1">Belongs to the helicase family. DinG subfamily. Type 2 sub-subfamily.</text>
</comment>
<feature type="chain" id="PRO_0000273043" description="3'-5' exonuclease DinG">
    <location>
        <begin position="1"/>
        <end position="897"/>
    </location>
</feature>
<feature type="domain" description="Exonuclease" evidence="1">
    <location>
        <begin position="8"/>
        <end position="161"/>
    </location>
</feature>
<feature type="domain" description="Helicase ATP-binding" evidence="1">
    <location>
        <begin position="241"/>
        <end position="496"/>
    </location>
</feature>
<feature type="domain" description="Helicase C-terminal" evidence="1">
    <location>
        <begin position="703"/>
        <end position="893"/>
    </location>
</feature>
<feature type="short sequence motif" description="DEAH box" evidence="1">
    <location>
        <begin position="448"/>
        <end position="451"/>
    </location>
</feature>
<feature type="binding site" evidence="1">
    <location>
        <begin position="276"/>
        <end position="283"/>
    </location>
    <ligand>
        <name>ATP</name>
        <dbReference type="ChEBI" id="CHEBI:30616"/>
    </ligand>
</feature>
<organism>
    <name type="scientific">Staphylococcus aureus (strain NCTC 8325 / PS 47)</name>
    <dbReference type="NCBI Taxonomy" id="93061"/>
    <lineage>
        <taxon>Bacteria</taxon>
        <taxon>Bacillati</taxon>
        <taxon>Bacillota</taxon>
        <taxon>Bacilli</taxon>
        <taxon>Bacillales</taxon>
        <taxon>Staphylococcaceae</taxon>
        <taxon>Staphylococcus</taxon>
    </lineage>
</organism>